<name>NR2E3_MOUSE</name>
<protein>
    <recommendedName>
        <fullName>Photoreceptor-specific nuclear receptor</fullName>
    </recommendedName>
    <alternativeName>
        <fullName>Nuclear receptor subfamily 2 group E member 3</fullName>
    </alternativeName>
    <alternativeName>
        <fullName>Retina-specific nuclear receptor</fullName>
    </alternativeName>
</protein>
<sequence>MSSTVAASTMPVSVAASKKESPGRWGLGEDPTGVGPSLQCRVCGDSSSGKHYGIYACNGCSGFFKRSVRRRLIYRCQVGAGMCPVDKAHRNQCQACRLKKCLQAGMNQDAVQNERQPRSMAQVHLDAMETGSDPRSEPVVASPALAGPSPRGPTSVSATRAMGHHFMASLITAETCAKLEPEDAEENIDVTSNDPEFPASPCSLDGIHETSARLLFMAVKWAKNLPVFSNLPFRDQVILLEEAWNELFLLGAIQWSLPLDSCPLLAPPEASGSSQGRLALASAETRFLQETISRFRALAVDPTEFACLKALVLFKPETRGLKDPEHVEALQDQSQVMLSQHSKAHHPSQPVRFGKLLLLLPSLRFLTAERIELLFFRKTIGNTPMEKLLCDMFKN</sequence>
<comment type="function">
    <text evidence="8 9 10 11">Orphan nuclear receptor of retinal photoreceptor cells. Transcriptional factor that is an activator of rod development and repressor of cone development. Binds the promoter region of a number of rod- and cone-specific genes, including rhodopsin, M- and S-opsin and rod-specific phosphodiesterase beta subunit. Enhances rhodopsin expression. Represses M- and S-cone opsin expression.</text>
</comment>
<comment type="subunit">
    <text evidence="1 2 10 12">Homodimer (By similarity). Interacts with PIAS3; the interaction sumoylates NR2E3 and promotes repression of cone-specific gene transcription and activation of rod-specific genes (PubMed:19186166). Component of a rod photoreceptor complex that includes NR2E3, NRL, CRX and NR1D1 (By similarity). Interacts with NR1D1 (By similarity). Interacts (via the DNA-binding domain) with CRX (via its DNA binding domain); the interaction represses S- and M-cone opsin expression (PubMed:19186166). Interacts with SAMD7 (PubMed:28900001).</text>
</comment>
<comment type="subcellular location">
    <subcellularLocation>
        <location evidence="3 8 10">Nucleus</location>
    </subcellularLocation>
</comment>
<comment type="tissue specificity">
    <text evidence="6 7 8 9 11">Retina. Rod-specific. Expressed in the outer nuclear lyer of the mature retina.</text>
</comment>
<comment type="developmental stage">
    <text evidence="9">Expression found as early as 18 dpc in developing retina. From P3 to P6, expression increases in developing rods. Expression, thereafter, in the future inner nuclear layer migrating to the final destination of the outer nuclear layer. In the mature retina, exclusively expressed in rods.</text>
</comment>
<comment type="PTM">
    <text evidence="10">Di- and tri-sumoylated in developing retina. PIAS3-mediated sumoylation promotes repression of cone-specific gene expression and activation of rod-specific genes. Sumoylation on Lys-178 appears to be the main site.</text>
</comment>
<comment type="disruption phenotype">
    <text evidence="7 9">Defects in Nr2e3 are the cause of the retinal degeneration type 7 (Rd7) phenotype characterized by excessive blue cones and loss of rods.</text>
</comment>
<comment type="similarity">
    <text evidence="13">Belongs to the nuclear hormone receptor family. NR2 subfamily.</text>
</comment>
<organism>
    <name type="scientific">Mus musculus</name>
    <name type="common">Mouse</name>
    <dbReference type="NCBI Taxonomy" id="10090"/>
    <lineage>
        <taxon>Eukaryota</taxon>
        <taxon>Metazoa</taxon>
        <taxon>Chordata</taxon>
        <taxon>Craniata</taxon>
        <taxon>Vertebrata</taxon>
        <taxon>Euteleostomi</taxon>
        <taxon>Mammalia</taxon>
        <taxon>Eutheria</taxon>
        <taxon>Euarchontoglires</taxon>
        <taxon>Glires</taxon>
        <taxon>Rodentia</taxon>
        <taxon>Myomorpha</taxon>
        <taxon>Muroidea</taxon>
        <taxon>Muridae</taxon>
        <taxon>Murinae</taxon>
        <taxon>Mus</taxon>
        <taxon>Mus</taxon>
    </lineage>
</organism>
<reference key="1">
    <citation type="journal article" date="1999" name="Proc. Natl. Acad. Sci. U.S.A.">
        <title>Retina-specific nuclear receptor: a potential regulator of cellular retinaldehyde-binding protein expressed in retinal pigment epithelium and Muller glial cells.</title>
        <authorList>
            <person name="Chen F."/>
            <person name="Figueroa D.J."/>
            <person name="Marmorstein A.D."/>
            <person name="Zhang Q."/>
            <person name="Petrukhin K."/>
            <person name="Caskey C.T."/>
            <person name="Austin C.P."/>
        </authorList>
    </citation>
    <scope>NUCLEOTIDE SEQUENCE [MRNA]</scope>
    <scope>TISSUE SPECIFICITY</scope>
    <source>
        <tissue>Retina</tissue>
    </source>
</reference>
<reference key="2">
    <citation type="journal article" date="2000" name="Proc. Natl. Acad. Sci. U.S.A.">
        <title>A deletion in a photoreceptor-specific nuclear receptor mRNA causes retinal degeneration in the rd7 mouse.</title>
        <authorList>
            <person name="Akhmedov N.B."/>
            <person name="Piriev N.I."/>
            <person name="Chang B."/>
            <person name="Rapoport A.L."/>
            <person name="Hawes N.L."/>
            <person name="Nishina P.M."/>
            <person name="Nusinowitz S."/>
            <person name="Heckenlively J.R."/>
            <person name="Roderick T.H."/>
            <person name="Kozak C.A."/>
            <person name="Danciger M."/>
            <person name="Davisson M.T."/>
            <person name="Farber D.B."/>
        </authorList>
    </citation>
    <scope>NUCLEOTIDE SEQUENCE [MRNA]</scope>
    <scope>TISSUE SPECIFICITY</scope>
    <scope>DISRUPTION PHENOTYPE</scope>
    <source>
        <strain>C57BL/6J</strain>
        <tissue>Retina</tissue>
    </source>
</reference>
<reference key="3">
    <citation type="journal article" date="2004" name="Genome Res.">
        <title>The status, quality, and expansion of the NIH full-length cDNA project: the Mammalian Gene Collection (MGC).</title>
        <authorList>
            <consortium name="The MGC Project Team"/>
        </authorList>
    </citation>
    <scope>NUCLEOTIDE SEQUENCE [LARGE SCALE MRNA]</scope>
    <source>
        <tissue>Eye</tissue>
    </source>
</reference>
<reference key="4">
    <citation type="journal article" date="2004" name="Hum. Mol. Genet.">
        <title>Photoreceptor-specific nuclear receptor NR2E3 functions as a transcriptional activator in rod photoreceptors.</title>
        <authorList>
            <person name="Cheng H."/>
            <person name="Khanna H."/>
            <person name="Oh E.C."/>
            <person name="Hicks D."/>
            <person name="Mitton K.P."/>
            <person name="Swaroop A."/>
        </authorList>
    </citation>
    <scope>FUNCTION</scope>
    <scope>TISSUE SPECIFICITY</scope>
    <scope>SUBCELLULAR LOCATION</scope>
</reference>
<reference key="5">
    <citation type="journal article" date="2005" name="J. Neurosci.">
        <title>The rod photoreceptor-specific nuclear receptor Nr2e3 represses transcription of multiple cone-specific genes.</title>
        <authorList>
            <person name="Chen J."/>
            <person name="Rattner A."/>
            <person name="Nathans J."/>
        </authorList>
    </citation>
    <scope>FUNCTION</scope>
    <scope>TISSUE SPECIFICITY</scope>
    <scope>DEVELOPMENTAL STAGE</scope>
    <scope>DISRUPTION PHENOTYPE</scope>
</reference>
<reference key="6">
    <citation type="journal article" date="2009" name="Neuron">
        <title>Pias3-dependent SUMOylation directs rod photoreceptor development.</title>
        <authorList>
            <person name="Onishi A."/>
            <person name="Peng G.-H."/>
            <person name="Hsu C."/>
            <person name="Alexis U."/>
            <person name="Chen S."/>
            <person name="Blackshaw S."/>
        </authorList>
    </citation>
    <scope>SUMOYLATION AT LYS-178</scope>
    <scope>INTERACTION WITH CRX AND PIAS3</scope>
    <scope>FUNCTION</scope>
    <scope>SUBCELLULAR LOCATION</scope>
    <scope>MUTAGENESIS OF LYS-178; LYS-315 AND LYS-322</scope>
</reference>
<reference key="7">
    <citation type="journal article" date="2011" name="PLoS ONE">
        <title>Nuclear receptor Rev-erb alpha (Nr1d1) functions in concert with Nr2e3 to regulate transcriptional networks in the retina.</title>
        <authorList>
            <person name="Mollema N.J."/>
            <person name="Yuan Y."/>
            <person name="Jelcick A.S."/>
            <person name="Sachs A.J."/>
            <person name="von Alpen D."/>
            <person name="Schorderet D."/>
            <person name="Escher P."/>
            <person name="Haider N.B."/>
        </authorList>
    </citation>
    <scope>FUNCTION</scope>
    <scope>TISSUE SPECIFICITY</scope>
</reference>
<reference key="8">
    <citation type="journal article" date="2017" name="Proc. Natl. Acad. Sci. U.S.A.">
        <title>Samd7 is a cell type-specific PRC1 component essential for establishing retinal rod photoreceptor identity.</title>
        <authorList>
            <person name="Omori Y."/>
            <person name="Kubo S."/>
            <person name="Kon T."/>
            <person name="Furuhashi M."/>
            <person name="Narita H."/>
            <person name="Kominami T."/>
            <person name="Ueno A."/>
            <person name="Tsutsumi R."/>
            <person name="Chaya T."/>
            <person name="Yamamoto H."/>
            <person name="Suetake I."/>
            <person name="Ueno S."/>
            <person name="Koseki H."/>
            <person name="Nakagawa A."/>
            <person name="Furukawa T."/>
        </authorList>
    </citation>
    <scope>INTERACTION WITH SAMD7</scope>
</reference>
<dbReference type="EMBL" id="AF148129">
    <property type="protein sequence ID" value="AAF22228.1"/>
    <property type="molecule type" value="mRNA"/>
</dbReference>
<dbReference type="EMBL" id="AF204053">
    <property type="protein sequence ID" value="AAF69682.1"/>
    <property type="molecule type" value="mRNA"/>
</dbReference>
<dbReference type="EMBL" id="BC017521">
    <property type="protein sequence ID" value="AAH17521.1"/>
    <property type="molecule type" value="mRNA"/>
</dbReference>
<dbReference type="CCDS" id="CCDS23255.1"/>
<dbReference type="RefSeq" id="NP_038736.1">
    <property type="nucleotide sequence ID" value="NM_013708.4"/>
</dbReference>
<dbReference type="SMR" id="Q9QXZ7"/>
<dbReference type="BioGRID" id="204819">
    <property type="interactions" value="1"/>
</dbReference>
<dbReference type="FunCoup" id="Q9QXZ7">
    <property type="interactions" value="431"/>
</dbReference>
<dbReference type="STRING" id="10090.ENSMUSP00000034831"/>
<dbReference type="iPTMnet" id="Q9QXZ7"/>
<dbReference type="PhosphoSitePlus" id="Q9QXZ7"/>
<dbReference type="PaxDb" id="10090-ENSMUSP00000034831"/>
<dbReference type="ProteomicsDB" id="253011"/>
<dbReference type="Antibodypedia" id="72976">
    <property type="antibodies" value="436 antibodies from 30 providers"/>
</dbReference>
<dbReference type="DNASU" id="23958"/>
<dbReference type="Ensembl" id="ENSMUST00000034831.3">
    <property type="protein sequence ID" value="ENSMUSP00000034831.3"/>
    <property type="gene ID" value="ENSMUSG00000032292.9"/>
</dbReference>
<dbReference type="GeneID" id="23958"/>
<dbReference type="KEGG" id="mmu:23958"/>
<dbReference type="UCSC" id="uc009pyu.1">
    <property type="organism name" value="mouse"/>
</dbReference>
<dbReference type="AGR" id="MGI:1346317"/>
<dbReference type="CTD" id="10002"/>
<dbReference type="MGI" id="MGI:1346317">
    <property type="gene designation" value="Nr2e3"/>
</dbReference>
<dbReference type="VEuPathDB" id="HostDB:ENSMUSG00000032292"/>
<dbReference type="eggNOG" id="KOG3575">
    <property type="taxonomic scope" value="Eukaryota"/>
</dbReference>
<dbReference type="GeneTree" id="ENSGT00940000156926"/>
<dbReference type="HOGENOM" id="CLU_007368_20_3_1"/>
<dbReference type="InParanoid" id="Q9QXZ7"/>
<dbReference type="OMA" id="HLTKIPM"/>
<dbReference type="OrthoDB" id="65587at9989"/>
<dbReference type="PhylomeDB" id="Q9QXZ7"/>
<dbReference type="TreeFam" id="TF315716"/>
<dbReference type="Reactome" id="R-MMU-383280">
    <property type="pathway name" value="Nuclear Receptor transcription pathway"/>
</dbReference>
<dbReference type="BioGRID-ORCS" id="23958">
    <property type="hits" value="1 hit in 75 CRISPR screens"/>
</dbReference>
<dbReference type="ChiTaRS" id="Ren1">
    <property type="organism name" value="mouse"/>
</dbReference>
<dbReference type="PRO" id="PR:Q9QXZ7"/>
<dbReference type="Proteomes" id="UP000000589">
    <property type="component" value="Chromosome 9"/>
</dbReference>
<dbReference type="RNAct" id="Q9QXZ7">
    <property type="molecule type" value="protein"/>
</dbReference>
<dbReference type="Bgee" id="ENSMUSG00000032292">
    <property type="expression patterns" value="Expressed in retinal neural layer and 28 other cell types or tissues"/>
</dbReference>
<dbReference type="ExpressionAtlas" id="Q9QXZ7">
    <property type="expression patterns" value="baseline and differential"/>
</dbReference>
<dbReference type="GO" id="GO:0005634">
    <property type="term" value="C:nucleus"/>
    <property type="evidence" value="ECO:0000314"/>
    <property type="project" value="MGI"/>
</dbReference>
<dbReference type="GO" id="GO:0005667">
    <property type="term" value="C:transcription regulator complex"/>
    <property type="evidence" value="ECO:0000314"/>
    <property type="project" value="MGI"/>
</dbReference>
<dbReference type="GO" id="GO:0001228">
    <property type="term" value="F:DNA-binding transcription activator activity, RNA polymerase II-specific"/>
    <property type="evidence" value="ECO:0007669"/>
    <property type="project" value="Ensembl"/>
</dbReference>
<dbReference type="GO" id="GO:0003700">
    <property type="term" value="F:DNA-binding transcription factor activity"/>
    <property type="evidence" value="ECO:0000314"/>
    <property type="project" value="MGI"/>
</dbReference>
<dbReference type="GO" id="GO:0000978">
    <property type="term" value="F:RNA polymerase II cis-regulatory region sequence-specific DNA binding"/>
    <property type="evidence" value="ECO:0007669"/>
    <property type="project" value="Ensembl"/>
</dbReference>
<dbReference type="GO" id="GO:0008270">
    <property type="term" value="F:zinc ion binding"/>
    <property type="evidence" value="ECO:0007669"/>
    <property type="project" value="UniProtKB-KW"/>
</dbReference>
<dbReference type="GO" id="GO:0008283">
    <property type="term" value="P:cell population proliferation"/>
    <property type="evidence" value="ECO:0000315"/>
    <property type="project" value="MGI"/>
</dbReference>
<dbReference type="GO" id="GO:0042462">
    <property type="term" value="P:eye photoreceptor cell development"/>
    <property type="evidence" value="ECO:0000315"/>
    <property type="project" value="MGI"/>
</dbReference>
<dbReference type="GO" id="GO:0008285">
    <property type="term" value="P:negative regulation of cell population proliferation"/>
    <property type="evidence" value="ECO:0000315"/>
    <property type="project" value="MGI"/>
</dbReference>
<dbReference type="GO" id="GO:0000122">
    <property type="term" value="P:negative regulation of transcription by RNA polymerase II"/>
    <property type="evidence" value="ECO:0000316"/>
    <property type="project" value="MGI"/>
</dbReference>
<dbReference type="GO" id="GO:0010628">
    <property type="term" value="P:positive regulation of gene expression"/>
    <property type="evidence" value="ECO:0000316"/>
    <property type="project" value="MGI"/>
</dbReference>
<dbReference type="GO" id="GO:0045944">
    <property type="term" value="P:positive regulation of transcription by RNA polymerase II"/>
    <property type="evidence" value="ECO:0000316"/>
    <property type="project" value="MGI"/>
</dbReference>
<dbReference type="GO" id="GO:0060041">
    <property type="term" value="P:retina development in camera-type eye"/>
    <property type="evidence" value="ECO:0000315"/>
    <property type="project" value="MGI"/>
</dbReference>
<dbReference type="CDD" id="cd06970">
    <property type="entry name" value="NR_DBD_PNR"/>
    <property type="match status" value="1"/>
</dbReference>
<dbReference type="CDD" id="cd06950">
    <property type="entry name" value="NR_LBD_Tlx_PNR_like"/>
    <property type="match status" value="1"/>
</dbReference>
<dbReference type="FunFam" id="1.10.565.10:FF:000022">
    <property type="entry name" value="Nuclear receptor subfamily 2 group E member 3"/>
    <property type="match status" value="1"/>
</dbReference>
<dbReference type="FunFam" id="3.30.50.10:FF:000028">
    <property type="entry name" value="Nuclear receptor subfamily 2, group E, member 3"/>
    <property type="match status" value="1"/>
</dbReference>
<dbReference type="Gene3D" id="3.30.50.10">
    <property type="entry name" value="Erythroid Transcription Factor GATA-1, subunit A"/>
    <property type="match status" value="1"/>
</dbReference>
<dbReference type="Gene3D" id="1.10.565.10">
    <property type="entry name" value="Retinoid X Receptor"/>
    <property type="match status" value="1"/>
</dbReference>
<dbReference type="InterPro" id="IPR035500">
    <property type="entry name" value="NHR-like_dom_sf"/>
</dbReference>
<dbReference type="InterPro" id="IPR000536">
    <property type="entry name" value="Nucl_hrmn_rcpt_lig-bd"/>
</dbReference>
<dbReference type="InterPro" id="IPR050274">
    <property type="entry name" value="Nuclear_hormone_rcpt_NR2"/>
</dbReference>
<dbReference type="InterPro" id="IPR001723">
    <property type="entry name" value="Nuclear_hrmn_rcpt"/>
</dbReference>
<dbReference type="InterPro" id="IPR001628">
    <property type="entry name" value="Znf_hrmn_rcpt"/>
</dbReference>
<dbReference type="InterPro" id="IPR013088">
    <property type="entry name" value="Znf_NHR/GATA"/>
</dbReference>
<dbReference type="PANTHER" id="PTHR24083">
    <property type="entry name" value="NUCLEAR HORMONE RECEPTOR"/>
    <property type="match status" value="1"/>
</dbReference>
<dbReference type="Pfam" id="PF00104">
    <property type="entry name" value="Hormone_recep"/>
    <property type="match status" value="1"/>
</dbReference>
<dbReference type="Pfam" id="PF00105">
    <property type="entry name" value="zf-C4"/>
    <property type="match status" value="1"/>
</dbReference>
<dbReference type="PRINTS" id="PR01282">
    <property type="entry name" value="COUPTNFACTOR"/>
</dbReference>
<dbReference type="PRINTS" id="PR00398">
    <property type="entry name" value="STRDHORMONER"/>
</dbReference>
<dbReference type="PRINTS" id="PR00047">
    <property type="entry name" value="STROIDFINGER"/>
</dbReference>
<dbReference type="SMART" id="SM00430">
    <property type="entry name" value="HOLI"/>
    <property type="match status" value="1"/>
</dbReference>
<dbReference type="SMART" id="SM00399">
    <property type="entry name" value="ZnF_C4"/>
    <property type="match status" value="1"/>
</dbReference>
<dbReference type="SUPFAM" id="SSF57716">
    <property type="entry name" value="Glucocorticoid receptor-like (DNA-binding domain)"/>
    <property type="match status" value="1"/>
</dbReference>
<dbReference type="SUPFAM" id="SSF48508">
    <property type="entry name" value="Nuclear receptor ligand-binding domain"/>
    <property type="match status" value="1"/>
</dbReference>
<dbReference type="PROSITE" id="PS51843">
    <property type="entry name" value="NR_LBD"/>
    <property type="match status" value="1"/>
</dbReference>
<dbReference type="PROSITE" id="PS00031">
    <property type="entry name" value="NUCLEAR_REC_DBD_1"/>
    <property type="match status" value="1"/>
</dbReference>
<dbReference type="PROSITE" id="PS51030">
    <property type="entry name" value="NUCLEAR_REC_DBD_2"/>
    <property type="match status" value="1"/>
</dbReference>
<gene>
    <name type="primary">Nr2e3</name>
    <name type="synonym">Pnr</name>
    <name type="synonym">Rnr</name>
</gene>
<accession>Q9QXZ7</accession>
<proteinExistence type="evidence at protein level"/>
<evidence type="ECO:0000250" key="1">
    <source>
        <dbReference type="UniProtKB" id="Q9TTF0"/>
    </source>
</evidence>
<evidence type="ECO:0000250" key="2">
    <source>
        <dbReference type="UniProtKB" id="Q9Y5X4"/>
    </source>
</evidence>
<evidence type="ECO:0000255" key="3">
    <source>
        <dbReference type="PROSITE-ProRule" id="PRU00407"/>
    </source>
</evidence>
<evidence type="ECO:0000255" key="4">
    <source>
        <dbReference type="PROSITE-ProRule" id="PRU01189"/>
    </source>
</evidence>
<evidence type="ECO:0000256" key="5">
    <source>
        <dbReference type="SAM" id="MobiDB-lite"/>
    </source>
</evidence>
<evidence type="ECO:0000269" key="6">
    <source>
    </source>
</evidence>
<evidence type="ECO:0000269" key="7">
    <source>
    </source>
</evidence>
<evidence type="ECO:0000269" key="8">
    <source>
    </source>
</evidence>
<evidence type="ECO:0000269" key="9">
    <source>
    </source>
</evidence>
<evidence type="ECO:0000269" key="10">
    <source>
    </source>
</evidence>
<evidence type="ECO:0000269" key="11">
    <source>
    </source>
</evidence>
<evidence type="ECO:0000269" key="12">
    <source>
    </source>
</evidence>
<evidence type="ECO:0000305" key="13"/>
<feature type="chain" id="PRO_0000053600" description="Photoreceptor-specific nuclear receptor">
    <location>
        <begin position="1"/>
        <end position="395"/>
    </location>
</feature>
<feature type="domain" description="NR LBD" evidence="4">
    <location>
        <begin position="162"/>
        <end position="395"/>
    </location>
</feature>
<feature type="DNA-binding region" description="Nuclear receptor" evidence="3">
    <location>
        <begin position="37"/>
        <end position="113"/>
    </location>
</feature>
<feature type="zinc finger region" description="NR C4-type" evidence="3">
    <location>
        <begin position="40"/>
        <end position="60"/>
    </location>
</feature>
<feature type="zinc finger region" description="NR C4-type" evidence="3">
    <location>
        <begin position="76"/>
        <end position="101"/>
    </location>
</feature>
<feature type="region of interest" description="Disordered" evidence="5">
    <location>
        <begin position="1"/>
        <end position="30"/>
    </location>
</feature>
<feature type="region of interest" description="Disordered" evidence="5">
    <location>
        <begin position="127"/>
        <end position="157"/>
    </location>
</feature>
<feature type="compositionally biased region" description="Polar residues" evidence="5">
    <location>
        <begin position="1"/>
        <end position="11"/>
    </location>
</feature>
<feature type="cross-link" description="Glycyl lysine isopeptide (Lys-Gly) (interchain with G-Cter in SUMO)">
    <location>
        <position position="178"/>
    </location>
</feature>
<feature type="cross-link" description="Glycyl lysine isopeptide (Lys-Gly) (interchain with G-Cter in SUMO)">
    <location>
        <position position="315"/>
    </location>
</feature>
<feature type="cross-link" description="Glycyl lysine isopeptide (Lys-Gly) (interchain with G-Cter in SUMO)">
    <location>
        <position position="322"/>
    </location>
</feature>
<feature type="mutagenesis site" description="Greatly reduced levels of PIAS3-mediated sumoylation. Completely abolishes sumoylation; when associated with R-315 and R-322." evidence="10">
    <original>K</original>
    <variation>R</variation>
    <location>
        <position position="178"/>
    </location>
</feature>
<feature type="mutagenesis site" description="Little change in sumoylation. Completely abolishes sumoylation; when associated with R-178 and R-322." evidence="10">
    <original>K</original>
    <variation>R</variation>
    <location>
        <position position="315"/>
    </location>
</feature>
<feature type="mutagenesis site" description="Little change in sumoylation. Completely abolishes sumoylation; when associated with R-178 and R-315." evidence="10">
    <original>K</original>
    <variation>R</variation>
    <location>
        <position position="322"/>
    </location>
</feature>
<keyword id="KW-0238">DNA-binding</keyword>
<keyword id="KW-1017">Isopeptide bond</keyword>
<keyword id="KW-0479">Metal-binding</keyword>
<keyword id="KW-0539">Nucleus</keyword>
<keyword id="KW-0675">Receptor</keyword>
<keyword id="KW-1185">Reference proteome</keyword>
<keyword id="KW-0804">Transcription</keyword>
<keyword id="KW-0805">Transcription regulation</keyword>
<keyword id="KW-0832">Ubl conjugation</keyword>
<keyword id="KW-0862">Zinc</keyword>
<keyword id="KW-0863">Zinc-finger</keyword>